<name>IBTK_XENLA</name>
<organism>
    <name type="scientific">Xenopus laevis</name>
    <name type="common">African clawed frog</name>
    <dbReference type="NCBI Taxonomy" id="8355"/>
    <lineage>
        <taxon>Eukaryota</taxon>
        <taxon>Metazoa</taxon>
        <taxon>Chordata</taxon>
        <taxon>Craniata</taxon>
        <taxon>Vertebrata</taxon>
        <taxon>Euteleostomi</taxon>
        <taxon>Amphibia</taxon>
        <taxon>Batrachia</taxon>
        <taxon>Anura</taxon>
        <taxon>Pipoidea</taxon>
        <taxon>Pipidae</taxon>
        <taxon>Xenopodinae</taxon>
        <taxon>Xenopus</taxon>
        <taxon>Xenopus</taxon>
    </lineage>
</organism>
<sequence length="1339" mass="149341">MERVWPECTTRCRSLQHALDVISVVTRASEQHIKVFLSSYCCNAVTLKDDFGRNATHIAASCGKKNVLDWLITGKGVDLAVKDKESGWTALHRSIFYGHIDCALSLLKHGSNLYIQDKDGYTPLDLVMKDRPPHIVFKTSDPTELYTWGDNVNFTLGHGTQQSKHHPELVEMFPRSGVYIKQMVLCKFHSVFLSQKGQVYTCGHGQGGRLGHGDELTCLVPRLVEGLRGHPCTQVAGAKDHTVVLTEDGYVYTFGLNTFHQLGIQPPPPNSNVPRQIQAKTMKGKTVLGVAAGRFHTVLWTKDAVYTVGLNGGQLGYLQDPNGEKFVSCPRQVSALHHKDINITLVSASDGATVCVSERGDIYLLSEYQCKKLASKQLNLKKVLVSGGILEHKAAPEHLKENGGQPASVFALDQAGRVFCWKSPGSSLKQCWWVYGRQLFMSDVALNKNEIMFVTQDGEGFTGKWMLEKKKKENTISNIMCHSDSQNVYEKISMQKLPFVHRAVSVATDPSGCNFAVLQSDPKTSLFEVPSVSSSVFAEDFEKLLNEANETDSIHDVTFQVGTKIFPAHKYILALRCDFFSKLFSSGEINSLDFPEVHQKGEDAAGCDLFVIEKIPPELFSHVLQFIYSDTCDMLLQGHKPKLWHKEENENTIICNFQKMGFREDIEGKSAYEVYKNSRICAENEKQKGKTKQSKKTRSIGDETSPVKMLQNTAKKFGLSNLSSRLDGVRYENGRINVFHKKSENKLRFNQKKCSSHYDVMMKSEDGKEFHCHKCVLCARLEYFNSMLSSSWIEASCCSQLEMPIHSDVLQVILDYIYTDEVLTVKESANVEFVCNVLVIADQLLIVRLKEICEVTIAERITLKNAAELLEFAALYNADQLKLSCLQFVGLNMGALLEARSLDVLSDDVLKDLSEAYRKMIPSMNKRIITPYLDGPDISILQSEDIESLISVQDDIYSYQITQEATLKKSKAKPKKKQRKRLDSSGGYNLSDIIQSPTSTGFVKPEKTNSVESLQDLLTSDSEGSFVGASSPRDLQSPDLFPVFTHETKETICVERNRSSPPVANGAASTKMPIPTTSSPKAIPMSRITPSTSPNWVAMPCSPASPVTMDLRAIMELEENIQKCGAMPKLNAGGTKPGTHVMKLSQKQRKMMAMSSKESNNENKPAKVTVAPTTIKSPAKTWAAAFHLGENKSFRDLLLEEKQSVTSFPSLSSDVKKSKHTEELDPSELARRPSGTLNQEAKLKCDVPNQDNSNPWHLTLSKNNASSAPVTFTAIVEEEEKQEAALIRSREKPLALIQIEERAIQDLLLHYQAIDNPEEYITIERAAQIPMATPMWNKH</sequence>
<protein>
    <recommendedName>
        <fullName>Inhibitor of Bruton tyrosine kinase</fullName>
        <shortName>IBtk</shortName>
    </recommendedName>
</protein>
<feature type="chain" id="PRO_0000280278" description="Inhibitor of Bruton tyrosine kinase">
    <location>
        <begin position="1"/>
        <end position="1339"/>
    </location>
</feature>
<feature type="repeat" description="ANK 1">
    <location>
        <begin position="51"/>
        <end position="81"/>
    </location>
</feature>
<feature type="repeat" description="ANK 2">
    <location>
        <begin position="86"/>
        <end position="115"/>
    </location>
</feature>
<feature type="repeat" description="ANK 3">
    <location>
        <begin position="119"/>
        <end position="154"/>
    </location>
</feature>
<feature type="repeat" description="RCC1 1">
    <location>
        <begin position="142"/>
        <end position="195"/>
    </location>
</feature>
<feature type="repeat" description="RCC1 2">
    <location>
        <begin position="196"/>
        <end position="247"/>
    </location>
</feature>
<feature type="repeat" description="RCC1 3">
    <location>
        <begin position="249"/>
        <end position="302"/>
    </location>
</feature>
<feature type="domain" description="BTB 1" evidence="2">
    <location>
        <begin position="555"/>
        <end position="636"/>
    </location>
</feature>
<feature type="domain" description="BTB 2" evidence="2">
    <location>
        <begin position="758"/>
        <end position="826"/>
    </location>
</feature>
<feature type="region of interest" description="Disordered" evidence="3">
    <location>
        <begin position="685"/>
        <end position="704"/>
    </location>
</feature>
<feature type="region of interest" description="Disordered" evidence="3">
    <location>
        <begin position="970"/>
        <end position="993"/>
    </location>
</feature>
<feature type="region of interest" description="Disordered" evidence="3">
    <location>
        <begin position="1058"/>
        <end position="1089"/>
    </location>
</feature>
<feature type="region of interest" description="Disordered" evidence="3">
    <location>
        <begin position="1208"/>
        <end position="1237"/>
    </location>
</feature>
<feature type="compositionally biased region" description="Basic residues" evidence="3">
    <location>
        <begin position="689"/>
        <end position="698"/>
    </location>
</feature>
<feature type="compositionally biased region" description="Basic residues" evidence="3">
    <location>
        <begin position="970"/>
        <end position="980"/>
    </location>
</feature>
<feature type="compositionally biased region" description="Basic and acidic residues" evidence="3">
    <location>
        <begin position="1214"/>
        <end position="1231"/>
    </location>
</feature>
<dbReference type="EMBL" id="BC070653">
    <property type="protein sequence ID" value="AAH70653.1"/>
    <property type="molecule type" value="mRNA"/>
</dbReference>
<dbReference type="RefSeq" id="NP_001084927.1">
    <property type="nucleotide sequence ID" value="NM_001091458.1"/>
</dbReference>
<dbReference type="SMR" id="Q6NRS1"/>
<dbReference type="DNASU" id="431983"/>
<dbReference type="GeneID" id="431983"/>
<dbReference type="KEGG" id="xla:431983"/>
<dbReference type="AGR" id="Xenbase:XB-GENE-5756000"/>
<dbReference type="CTD" id="431983"/>
<dbReference type="Xenbase" id="XB-GENE-5756000">
    <property type="gene designation" value="ibtk.L"/>
</dbReference>
<dbReference type="OrthoDB" id="1893551at2759"/>
<dbReference type="Proteomes" id="UP000186698">
    <property type="component" value="Chromosome 5L"/>
</dbReference>
<dbReference type="Bgee" id="431983">
    <property type="expression patterns" value="Expressed in zone of skin and 19 other cell types or tissues"/>
</dbReference>
<dbReference type="GO" id="GO:0005737">
    <property type="term" value="C:cytoplasm"/>
    <property type="evidence" value="ECO:0000318"/>
    <property type="project" value="GO_Central"/>
</dbReference>
<dbReference type="GO" id="GO:0016020">
    <property type="term" value="C:membrane"/>
    <property type="evidence" value="ECO:0007669"/>
    <property type="project" value="UniProtKB-SubCell"/>
</dbReference>
<dbReference type="GO" id="GO:0005654">
    <property type="term" value="C:nucleoplasm"/>
    <property type="evidence" value="ECO:0000318"/>
    <property type="project" value="GO_Central"/>
</dbReference>
<dbReference type="GO" id="GO:0019901">
    <property type="term" value="F:protein kinase binding"/>
    <property type="evidence" value="ECO:0000318"/>
    <property type="project" value="GO_Central"/>
</dbReference>
<dbReference type="GO" id="GO:0030292">
    <property type="term" value="F:protein tyrosine kinase inhibitor activity"/>
    <property type="evidence" value="ECO:0000318"/>
    <property type="project" value="GO_Central"/>
</dbReference>
<dbReference type="GO" id="GO:0051209">
    <property type="term" value="P:release of sequestered calcium ion into cytosol"/>
    <property type="evidence" value="ECO:0000318"/>
    <property type="project" value="GO_Central"/>
</dbReference>
<dbReference type="CDD" id="cd18500">
    <property type="entry name" value="BACK_IBtk"/>
    <property type="match status" value="1"/>
</dbReference>
<dbReference type="CDD" id="cd18301">
    <property type="entry name" value="BTB1_POZ_IBtk"/>
    <property type="match status" value="1"/>
</dbReference>
<dbReference type="CDD" id="cd18302">
    <property type="entry name" value="BTB2_POZ_IBtk"/>
    <property type="match status" value="1"/>
</dbReference>
<dbReference type="FunFam" id="1.25.40.20:FF:000090">
    <property type="entry name" value="inhibitor of Bruton tyrosine kinase isoform X1"/>
    <property type="match status" value="1"/>
</dbReference>
<dbReference type="FunFam" id="3.30.710.10:FF:000105">
    <property type="entry name" value="inhibitor of Bruton tyrosine kinase isoform X1"/>
    <property type="match status" value="1"/>
</dbReference>
<dbReference type="FunFam" id="2.130.10.30:FF:000011">
    <property type="entry name" value="inhibitor of Bruton tyrosine kinase isoform X2"/>
    <property type="match status" value="1"/>
</dbReference>
<dbReference type="Gene3D" id="1.25.40.20">
    <property type="entry name" value="Ankyrin repeat-containing domain"/>
    <property type="match status" value="1"/>
</dbReference>
<dbReference type="Gene3D" id="3.30.710.10">
    <property type="entry name" value="Potassium Channel Kv1.1, Chain A"/>
    <property type="match status" value="2"/>
</dbReference>
<dbReference type="Gene3D" id="2.130.10.30">
    <property type="entry name" value="Regulator of chromosome condensation 1/beta-lactamase-inhibitor protein II"/>
    <property type="match status" value="1"/>
</dbReference>
<dbReference type="InterPro" id="IPR002110">
    <property type="entry name" value="Ankyrin_rpt"/>
</dbReference>
<dbReference type="InterPro" id="IPR036770">
    <property type="entry name" value="Ankyrin_rpt-contain_sf"/>
</dbReference>
<dbReference type="InterPro" id="IPR000210">
    <property type="entry name" value="BTB/POZ_dom"/>
</dbReference>
<dbReference type="InterPro" id="IPR009091">
    <property type="entry name" value="RCC1/BLIP-II"/>
</dbReference>
<dbReference type="InterPro" id="IPR000408">
    <property type="entry name" value="Reg_chr_condens"/>
</dbReference>
<dbReference type="InterPro" id="IPR051625">
    <property type="entry name" value="Signaling_Regulatory_Domain"/>
</dbReference>
<dbReference type="InterPro" id="IPR011333">
    <property type="entry name" value="SKP1/BTB/POZ_sf"/>
</dbReference>
<dbReference type="PANTHER" id="PTHR22872">
    <property type="entry name" value="BTK-BINDING PROTEIN-RELATED"/>
    <property type="match status" value="1"/>
</dbReference>
<dbReference type="PANTHER" id="PTHR22872:SF2">
    <property type="entry name" value="INHIBITOR OF BRUTON TYROSINE KINASE"/>
    <property type="match status" value="1"/>
</dbReference>
<dbReference type="Pfam" id="PF12796">
    <property type="entry name" value="Ank_2"/>
    <property type="match status" value="1"/>
</dbReference>
<dbReference type="Pfam" id="PF00651">
    <property type="entry name" value="BTB"/>
    <property type="match status" value="2"/>
</dbReference>
<dbReference type="Pfam" id="PF00415">
    <property type="entry name" value="RCC1"/>
    <property type="match status" value="3"/>
</dbReference>
<dbReference type="PRINTS" id="PR00633">
    <property type="entry name" value="RCCNDNSATION"/>
</dbReference>
<dbReference type="SMART" id="SM00248">
    <property type="entry name" value="ANK"/>
    <property type="match status" value="2"/>
</dbReference>
<dbReference type="SMART" id="SM00225">
    <property type="entry name" value="BTB"/>
    <property type="match status" value="2"/>
</dbReference>
<dbReference type="SUPFAM" id="SSF48403">
    <property type="entry name" value="Ankyrin repeat"/>
    <property type="match status" value="1"/>
</dbReference>
<dbReference type="SUPFAM" id="SSF54695">
    <property type="entry name" value="POZ domain"/>
    <property type="match status" value="2"/>
</dbReference>
<dbReference type="SUPFAM" id="SSF50985">
    <property type="entry name" value="RCC1/BLIP-II"/>
    <property type="match status" value="1"/>
</dbReference>
<dbReference type="PROSITE" id="PS50297">
    <property type="entry name" value="ANK_REP_REGION"/>
    <property type="match status" value="1"/>
</dbReference>
<dbReference type="PROSITE" id="PS50088">
    <property type="entry name" value="ANK_REPEAT"/>
    <property type="match status" value="1"/>
</dbReference>
<dbReference type="PROSITE" id="PS50097">
    <property type="entry name" value="BTB"/>
    <property type="match status" value="2"/>
</dbReference>
<dbReference type="PROSITE" id="PS50012">
    <property type="entry name" value="RCC1_3"/>
    <property type="match status" value="3"/>
</dbReference>
<gene>
    <name type="primary">ibtk</name>
</gene>
<accession>Q6NRS1</accession>
<proteinExistence type="evidence at transcript level"/>
<keyword id="KW-0040">ANK repeat</keyword>
<keyword id="KW-0963">Cytoplasm</keyword>
<keyword id="KW-0472">Membrane</keyword>
<keyword id="KW-1185">Reference proteome</keyword>
<keyword id="KW-0677">Repeat</keyword>
<evidence type="ECO:0000250" key="1"/>
<evidence type="ECO:0000255" key="2">
    <source>
        <dbReference type="PROSITE-ProRule" id="PRU00037"/>
    </source>
</evidence>
<evidence type="ECO:0000256" key="3">
    <source>
        <dbReference type="SAM" id="MobiDB-lite"/>
    </source>
</evidence>
<comment type="function">
    <text evidence="1">Acts as an inhibitor of BTK tyrosine kinase activity, thereby playing a role in B-cell development.</text>
</comment>
<comment type="subcellular location">
    <subcellularLocation>
        <location evidence="1">Cytoplasm</location>
    </subcellularLocation>
    <subcellularLocation>
        <location evidence="1">Membrane</location>
        <topology evidence="1">Peripheral membrane protein</topology>
    </subcellularLocation>
</comment>
<reference key="1">
    <citation type="submission" date="2004-05" db="EMBL/GenBank/DDBJ databases">
        <authorList>
            <consortium name="NIH - Xenopus Gene Collection (XGC) project"/>
        </authorList>
    </citation>
    <scope>NUCLEOTIDE SEQUENCE [LARGE SCALE MRNA]</scope>
    <source>
        <tissue>Kidney</tissue>
    </source>
</reference>